<name>IHFB_NEIMF</name>
<dbReference type="EMBL" id="AM421808">
    <property type="protein sequence ID" value="CAM10473.1"/>
    <property type="molecule type" value="Genomic_DNA"/>
</dbReference>
<dbReference type="RefSeq" id="WP_002213349.1">
    <property type="nucleotide sequence ID" value="NC_008767.1"/>
</dbReference>
<dbReference type="SMR" id="A1KUD0"/>
<dbReference type="KEGG" id="nmc:NMC1239"/>
<dbReference type="HOGENOM" id="CLU_105066_2_0_4"/>
<dbReference type="Proteomes" id="UP000002286">
    <property type="component" value="Chromosome"/>
</dbReference>
<dbReference type="GO" id="GO:0005694">
    <property type="term" value="C:chromosome"/>
    <property type="evidence" value="ECO:0007669"/>
    <property type="project" value="InterPro"/>
</dbReference>
<dbReference type="GO" id="GO:0005829">
    <property type="term" value="C:cytosol"/>
    <property type="evidence" value="ECO:0007669"/>
    <property type="project" value="TreeGrafter"/>
</dbReference>
<dbReference type="GO" id="GO:0003677">
    <property type="term" value="F:DNA binding"/>
    <property type="evidence" value="ECO:0007669"/>
    <property type="project" value="UniProtKB-UniRule"/>
</dbReference>
<dbReference type="GO" id="GO:0030527">
    <property type="term" value="F:structural constituent of chromatin"/>
    <property type="evidence" value="ECO:0007669"/>
    <property type="project" value="InterPro"/>
</dbReference>
<dbReference type="GO" id="GO:0006310">
    <property type="term" value="P:DNA recombination"/>
    <property type="evidence" value="ECO:0007669"/>
    <property type="project" value="UniProtKB-UniRule"/>
</dbReference>
<dbReference type="GO" id="GO:0006355">
    <property type="term" value="P:regulation of DNA-templated transcription"/>
    <property type="evidence" value="ECO:0007669"/>
    <property type="project" value="UniProtKB-UniRule"/>
</dbReference>
<dbReference type="GO" id="GO:0006417">
    <property type="term" value="P:regulation of translation"/>
    <property type="evidence" value="ECO:0007669"/>
    <property type="project" value="UniProtKB-UniRule"/>
</dbReference>
<dbReference type="CDD" id="cd13836">
    <property type="entry name" value="IHF_B"/>
    <property type="match status" value="1"/>
</dbReference>
<dbReference type="FunFam" id="4.10.520.10:FF:000003">
    <property type="entry name" value="Integration host factor subunit beta"/>
    <property type="match status" value="1"/>
</dbReference>
<dbReference type="Gene3D" id="4.10.520.10">
    <property type="entry name" value="IHF-like DNA-binding proteins"/>
    <property type="match status" value="1"/>
</dbReference>
<dbReference type="HAMAP" id="MF_00381">
    <property type="entry name" value="IHF_beta"/>
    <property type="match status" value="1"/>
</dbReference>
<dbReference type="InterPro" id="IPR000119">
    <property type="entry name" value="Hist_DNA-bd"/>
</dbReference>
<dbReference type="InterPro" id="IPR020816">
    <property type="entry name" value="Histone-like_DNA-bd_CS"/>
</dbReference>
<dbReference type="InterPro" id="IPR010992">
    <property type="entry name" value="IHF-like_DNA-bd_dom_sf"/>
</dbReference>
<dbReference type="InterPro" id="IPR005685">
    <property type="entry name" value="IHF_beta"/>
</dbReference>
<dbReference type="NCBIfam" id="TIGR00988">
    <property type="entry name" value="hip"/>
    <property type="match status" value="1"/>
</dbReference>
<dbReference type="NCBIfam" id="NF001222">
    <property type="entry name" value="PRK00199.1"/>
    <property type="match status" value="1"/>
</dbReference>
<dbReference type="PANTHER" id="PTHR33175">
    <property type="entry name" value="DNA-BINDING PROTEIN HU"/>
    <property type="match status" value="1"/>
</dbReference>
<dbReference type="PANTHER" id="PTHR33175:SF5">
    <property type="entry name" value="INTEGRATION HOST FACTOR SUBUNIT BETA"/>
    <property type="match status" value="1"/>
</dbReference>
<dbReference type="Pfam" id="PF00216">
    <property type="entry name" value="Bac_DNA_binding"/>
    <property type="match status" value="1"/>
</dbReference>
<dbReference type="PRINTS" id="PR01727">
    <property type="entry name" value="DNABINDINGHU"/>
</dbReference>
<dbReference type="SMART" id="SM00411">
    <property type="entry name" value="BHL"/>
    <property type="match status" value="1"/>
</dbReference>
<dbReference type="SUPFAM" id="SSF47729">
    <property type="entry name" value="IHF-like DNA-binding proteins"/>
    <property type="match status" value="1"/>
</dbReference>
<dbReference type="PROSITE" id="PS00045">
    <property type="entry name" value="HISTONE_LIKE"/>
    <property type="match status" value="1"/>
</dbReference>
<accession>A1KUD0</accession>
<sequence length="104" mass="11804">MTKSELMVRLAEVFAAKNGTHLLAKDVEYSVKVLVDTMTRSLARGQRIEIRGFGSFDLNHRPARIGRNPKTGERVEVPEKHVPHFKPGKELRERVDLALKENAN</sequence>
<proteinExistence type="inferred from homology"/>
<comment type="function">
    <text evidence="1">This protein is one of the two subunits of integration host factor, a specific DNA-binding protein that functions in genetic recombination as well as in transcriptional and translational control.</text>
</comment>
<comment type="subunit">
    <text evidence="1">Heterodimer of an alpha and a beta chain.</text>
</comment>
<comment type="similarity">
    <text evidence="1">Belongs to the bacterial histone-like protein family.</text>
</comment>
<evidence type="ECO:0000255" key="1">
    <source>
        <dbReference type="HAMAP-Rule" id="MF_00381"/>
    </source>
</evidence>
<gene>
    <name evidence="1" type="primary">ihfB</name>
    <name evidence="1" type="synonym">himD</name>
    <name type="ordered locus">NMC1239</name>
</gene>
<reference key="1">
    <citation type="journal article" date="2007" name="PLoS Genet.">
        <title>Meningococcal genetic variation mechanisms viewed through comparative analysis of serogroup C strain FAM18.</title>
        <authorList>
            <person name="Bentley S.D."/>
            <person name="Vernikos G.S."/>
            <person name="Snyder L.A.S."/>
            <person name="Churcher C."/>
            <person name="Arrowsmith C."/>
            <person name="Chillingworth T."/>
            <person name="Cronin A."/>
            <person name="Davis P.H."/>
            <person name="Holroyd N.E."/>
            <person name="Jagels K."/>
            <person name="Maddison M."/>
            <person name="Moule S."/>
            <person name="Rabbinowitsch E."/>
            <person name="Sharp S."/>
            <person name="Unwin L."/>
            <person name="Whitehead S."/>
            <person name="Quail M.A."/>
            <person name="Achtman M."/>
            <person name="Barrell B.G."/>
            <person name="Saunders N.J."/>
            <person name="Parkhill J."/>
        </authorList>
    </citation>
    <scope>NUCLEOTIDE SEQUENCE [LARGE SCALE GENOMIC DNA]</scope>
    <source>
        <strain>ATCC 700532 / DSM 15464 / FAM18</strain>
    </source>
</reference>
<feature type="chain" id="PRO_1000060620" description="Integration host factor subunit beta">
    <location>
        <begin position="1"/>
        <end position="104"/>
    </location>
</feature>
<keyword id="KW-0233">DNA recombination</keyword>
<keyword id="KW-0238">DNA-binding</keyword>
<keyword id="KW-0804">Transcription</keyword>
<keyword id="KW-0805">Transcription regulation</keyword>
<keyword id="KW-0810">Translation regulation</keyword>
<organism>
    <name type="scientific">Neisseria meningitidis serogroup C / serotype 2a (strain ATCC 700532 / DSM 15464 / FAM18)</name>
    <dbReference type="NCBI Taxonomy" id="272831"/>
    <lineage>
        <taxon>Bacteria</taxon>
        <taxon>Pseudomonadati</taxon>
        <taxon>Pseudomonadota</taxon>
        <taxon>Betaproteobacteria</taxon>
        <taxon>Neisseriales</taxon>
        <taxon>Neisseriaceae</taxon>
        <taxon>Neisseria</taxon>
    </lineage>
</organism>
<protein>
    <recommendedName>
        <fullName evidence="1">Integration host factor subunit beta</fullName>
        <shortName evidence="1">IHF-beta</shortName>
    </recommendedName>
</protein>